<protein>
    <recommendedName>
        <fullName evidence="1">Large ribosomal subunit protein uL16m</fullName>
    </recommendedName>
    <alternativeName>
        <fullName>60S ribosomal protein L16, mitochondrial</fullName>
    </alternativeName>
</protein>
<proteinExistence type="inferred from homology"/>
<accession>P26862</accession>
<feature type="chain" id="PRO_0000062325" description="Large ribosomal subunit protein uL16m">
    <location>
        <begin position="1"/>
        <end position="135"/>
    </location>
</feature>
<sequence>MLYPKRTKFRKYQKGRCKGCKADGTQLCFGKYGIKSCEAGRISYQAIEAARRAISRKFRRNSKIWVRVFADIPITSKPAEVRMGKGKGNTKGWIARVLKGQILFEMDCVSLSNAQQAATLAAHKLGLSIKFFKWS</sequence>
<reference key="1">
    <citation type="journal article" date="1992" name="J. Mol. Biol.">
        <title>Gene organization deduced from the complete sequence of liverwort Marchantia polymorpha mitochondrial DNA. A primitive form of plant mitochondrial genome.</title>
        <authorList>
            <person name="Oda K."/>
            <person name="Yamato K."/>
            <person name="Ohta E."/>
            <person name="Nakamura Y."/>
            <person name="Takemura M."/>
            <person name="Nozato N."/>
            <person name="Akashi K."/>
            <person name="Kanegae T."/>
            <person name="Ogura Y."/>
            <person name="Kohchi T."/>
            <person name="Ohyama K."/>
        </authorList>
    </citation>
    <scope>NUCLEOTIDE SEQUENCE [GENOMIC DNA]</scope>
</reference>
<reference key="2">
    <citation type="journal article" date="1992" name="Nucleic Acids Res.">
        <title>Gene clusters for ribosomal proteins in the mitochondrial genome of a liverwort, Marchantia polymorpha.</title>
        <authorList>
            <person name="Takemura M."/>
            <person name="Oda K."/>
            <person name="Yamato K."/>
            <person name="Ohta E."/>
            <person name="Nakamura Y."/>
            <person name="Nozato N."/>
            <person name="Akashi K."/>
            <person name="Ohyama K."/>
        </authorList>
    </citation>
    <scope>NUCLEOTIDE SEQUENCE [GENOMIC DNA]</scope>
</reference>
<dbReference type="EMBL" id="M68929">
    <property type="protein sequence ID" value="AAC09418.1"/>
    <property type="molecule type" value="Genomic_DNA"/>
</dbReference>
<dbReference type="PIR" id="S25978">
    <property type="entry name" value="S25978"/>
</dbReference>
<dbReference type="RefSeq" id="NP_054421.1">
    <property type="nucleotide sequence ID" value="NC_001660.1"/>
</dbReference>
<dbReference type="SMR" id="P26862"/>
<dbReference type="GeneID" id="2702470"/>
<dbReference type="GO" id="GO:0005739">
    <property type="term" value="C:mitochondrion"/>
    <property type="evidence" value="ECO:0007669"/>
    <property type="project" value="UniProtKB-SubCell"/>
</dbReference>
<dbReference type="GO" id="GO:1990904">
    <property type="term" value="C:ribonucleoprotein complex"/>
    <property type="evidence" value="ECO:0007669"/>
    <property type="project" value="UniProtKB-KW"/>
</dbReference>
<dbReference type="GO" id="GO:0005840">
    <property type="term" value="C:ribosome"/>
    <property type="evidence" value="ECO:0007669"/>
    <property type="project" value="UniProtKB-KW"/>
</dbReference>
<dbReference type="GO" id="GO:0019843">
    <property type="term" value="F:rRNA binding"/>
    <property type="evidence" value="ECO:0007669"/>
    <property type="project" value="InterPro"/>
</dbReference>
<dbReference type="GO" id="GO:0003735">
    <property type="term" value="F:structural constituent of ribosome"/>
    <property type="evidence" value="ECO:0007669"/>
    <property type="project" value="InterPro"/>
</dbReference>
<dbReference type="GO" id="GO:0006412">
    <property type="term" value="P:translation"/>
    <property type="evidence" value="ECO:0007669"/>
    <property type="project" value="InterPro"/>
</dbReference>
<dbReference type="CDD" id="cd01433">
    <property type="entry name" value="Ribosomal_L16_L10e"/>
    <property type="match status" value="1"/>
</dbReference>
<dbReference type="FunFam" id="3.90.1170.10:FF:000001">
    <property type="entry name" value="50S ribosomal protein L16"/>
    <property type="match status" value="1"/>
</dbReference>
<dbReference type="Gene3D" id="3.90.1170.10">
    <property type="entry name" value="Ribosomal protein L10e/L16"/>
    <property type="match status" value="1"/>
</dbReference>
<dbReference type="InterPro" id="IPR047873">
    <property type="entry name" value="Ribosomal_uL16"/>
</dbReference>
<dbReference type="InterPro" id="IPR000114">
    <property type="entry name" value="Ribosomal_uL16_bact-type"/>
</dbReference>
<dbReference type="InterPro" id="IPR020798">
    <property type="entry name" value="Ribosomal_uL16_CS"/>
</dbReference>
<dbReference type="InterPro" id="IPR016180">
    <property type="entry name" value="Ribosomal_uL16_dom"/>
</dbReference>
<dbReference type="InterPro" id="IPR036920">
    <property type="entry name" value="Ribosomal_uL16_sf"/>
</dbReference>
<dbReference type="NCBIfam" id="TIGR01164">
    <property type="entry name" value="rplP_bact"/>
    <property type="match status" value="1"/>
</dbReference>
<dbReference type="PANTHER" id="PTHR12220">
    <property type="entry name" value="50S/60S RIBOSOMAL PROTEIN L16"/>
    <property type="match status" value="1"/>
</dbReference>
<dbReference type="PANTHER" id="PTHR12220:SF24">
    <property type="entry name" value="LARGE RIBOSOMAL SUBUNIT PROTEIN UL16M"/>
    <property type="match status" value="1"/>
</dbReference>
<dbReference type="Pfam" id="PF00252">
    <property type="entry name" value="Ribosomal_L16"/>
    <property type="match status" value="1"/>
</dbReference>
<dbReference type="PRINTS" id="PR00060">
    <property type="entry name" value="RIBOSOMALL16"/>
</dbReference>
<dbReference type="SUPFAM" id="SSF54686">
    <property type="entry name" value="Ribosomal protein L16p/L10e"/>
    <property type="match status" value="1"/>
</dbReference>
<dbReference type="PROSITE" id="PS00586">
    <property type="entry name" value="RIBOSOMAL_L16_1"/>
    <property type="match status" value="1"/>
</dbReference>
<dbReference type="PROSITE" id="PS00701">
    <property type="entry name" value="RIBOSOMAL_L16_2"/>
    <property type="match status" value="1"/>
</dbReference>
<geneLocation type="mitochondrion"/>
<organism>
    <name type="scientific">Marchantia polymorpha</name>
    <name type="common">Common liverwort</name>
    <name type="synonym">Marchantia aquatica</name>
    <dbReference type="NCBI Taxonomy" id="3197"/>
    <lineage>
        <taxon>Eukaryota</taxon>
        <taxon>Viridiplantae</taxon>
        <taxon>Streptophyta</taxon>
        <taxon>Embryophyta</taxon>
        <taxon>Marchantiophyta</taxon>
        <taxon>Marchantiopsida</taxon>
        <taxon>Marchantiidae</taxon>
        <taxon>Marchantiales</taxon>
        <taxon>Marchantiaceae</taxon>
        <taxon>Marchantia</taxon>
    </lineage>
</organism>
<gene>
    <name type="primary">RPL16</name>
</gene>
<evidence type="ECO:0000305" key="1"/>
<name>RM16_MARPO</name>
<keyword id="KW-0496">Mitochondrion</keyword>
<keyword id="KW-0687">Ribonucleoprotein</keyword>
<keyword id="KW-0689">Ribosomal protein</keyword>
<comment type="subcellular location">
    <subcellularLocation>
        <location>Mitochondrion</location>
    </subcellularLocation>
</comment>
<comment type="similarity">
    <text evidence="1">Belongs to the universal ribosomal protein uL16 family.</text>
</comment>